<proteinExistence type="inferred from homology"/>
<organism>
    <name type="scientific">Edwardsiella ictaluri (strain 93-146)</name>
    <dbReference type="NCBI Taxonomy" id="634503"/>
    <lineage>
        <taxon>Bacteria</taxon>
        <taxon>Pseudomonadati</taxon>
        <taxon>Pseudomonadota</taxon>
        <taxon>Gammaproteobacteria</taxon>
        <taxon>Enterobacterales</taxon>
        <taxon>Hafniaceae</taxon>
        <taxon>Edwardsiella</taxon>
    </lineage>
</organism>
<protein>
    <recommendedName>
        <fullName evidence="1">NAD-capped RNA hydrolase NudC</fullName>
        <shortName evidence="1">DeNADding enzyme NudC</shortName>
        <ecNumber evidence="1">3.6.1.-</ecNumber>
    </recommendedName>
    <alternativeName>
        <fullName evidence="1">NADH pyrophosphatase</fullName>
        <ecNumber evidence="1">3.6.1.22</ecNumber>
    </alternativeName>
</protein>
<name>NUDC_EDWI9</name>
<gene>
    <name evidence="1" type="primary">nudC</name>
    <name type="ordered locus">NT01EI_0179</name>
</gene>
<reference key="1">
    <citation type="submission" date="2009-03" db="EMBL/GenBank/DDBJ databases">
        <title>Complete genome sequence of Edwardsiella ictaluri 93-146.</title>
        <authorList>
            <person name="Williams M.L."/>
            <person name="Gillaspy A.F."/>
            <person name="Dyer D.W."/>
            <person name="Thune R.L."/>
            <person name="Waldbieser G.C."/>
            <person name="Schuster S.C."/>
            <person name="Gipson J."/>
            <person name="Zaitshik J."/>
            <person name="Landry C."/>
            <person name="Lawrence M.L."/>
        </authorList>
    </citation>
    <scope>NUCLEOTIDE SEQUENCE [LARGE SCALE GENOMIC DNA]</scope>
    <source>
        <strain>93-146</strain>
    </source>
</reference>
<evidence type="ECO:0000255" key="1">
    <source>
        <dbReference type="HAMAP-Rule" id="MF_00297"/>
    </source>
</evidence>
<dbReference type="EC" id="3.6.1.-" evidence="1"/>
<dbReference type="EC" id="3.6.1.22" evidence="1"/>
<dbReference type="EMBL" id="CP001600">
    <property type="protein sequence ID" value="ACR67425.1"/>
    <property type="molecule type" value="Genomic_DNA"/>
</dbReference>
<dbReference type="RefSeq" id="WP_015869637.1">
    <property type="nucleotide sequence ID" value="NZ_CP169062.1"/>
</dbReference>
<dbReference type="SMR" id="C5BHE7"/>
<dbReference type="STRING" id="67780.B6E78_12050"/>
<dbReference type="GeneID" id="69537285"/>
<dbReference type="KEGG" id="eic:NT01EI_0179"/>
<dbReference type="PATRIC" id="fig|634503.3.peg.161"/>
<dbReference type="HOGENOM" id="CLU_037162_0_1_6"/>
<dbReference type="OrthoDB" id="9791656at2"/>
<dbReference type="Proteomes" id="UP000001485">
    <property type="component" value="Chromosome"/>
</dbReference>
<dbReference type="GO" id="GO:0005829">
    <property type="term" value="C:cytosol"/>
    <property type="evidence" value="ECO:0007669"/>
    <property type="project" value="TreeGrafter"/>
</dbReference>
<dbReference type="GO" id="GO:0000287">
    <property type="term" value="F:magnesium ion binding"/>
    <property type="evidence" value="ECO:0007669"/>
    <property type="project" value="UniProtKB-UniRule"/>
</dbReference>
<dbReference type="GO" id="GO:0030145">
    <property type="term" value="F:manganese ion binding"/>
    <property type="evidence" value="ECO:0007669"/>
    <property type="project" value="UniProtKB-UniRule"/>
</dbReference>
<dbReference type="GO" id="GO:0000210">
    <property type="term" value="F:NAD+ diphosphatase activity"/>
    <property type="evidence" value="ECO:0007669"/>
    <property type="project" value="UniProtKB-UniRule"/>
</dbReference>
<dbReference type="GO" id="GO:0035529">
    <property type="term" value="F:NADH pyrophosphatase activity"/>
    <property type="evidence" value="ECO:0007669"/>
    <property type="project" value="TreeGrafter"/>
</dbReference>
<dbReference type="GO" id="GO:0110153">
    <property type="term" value="F:RNA NAD-cap (NMN-forming) hydrolase activity"/>
    <property type="evidence" value="ECO:0007669"/>
    <property type="project" value="RHEA"/>
</dbReference>
<dbReference type="GO" id="GO:0008270">
    <property type="term" value="F:zinc ion binding"/>
    <property type="evidence" value="ECO:0007669"/>
    <property type="project" value="UniProtKB-UniRule"/>
</dbReference>
<dbReference type="GO" id="GO:0019677">
    <property type="term" value="P:NAD catabolic process"/>
    <property type="evidence" value="ECO:0007669"/>
    <property type="project" value="TreeGrafter"/>
</dbReference>
<dbReference type="GO" id="GO:0006734">
    <property type="term" value="P:NADH metabolic process"/>
    <property type="evidence" value="ECO:0007669"/>
    <property type="project" value="TreeGrafter"/>
</dbReference>
<dbReference type="GO" id="GO:0006742">
    <property type="term" value="P:NADP catabolic process"/>
    <property type="evidence" value="ECO:0007669"/>
    <property type="project" value="TreeGrafter"/>
</dbReference>
<dbReference type="CDD" id="cd03429">
    <property type="entry name" value="NUDIX_NADH_pyrophosphatase_Nudt13"/>
    <property type="match status" value="1"/>
</dbReference>
<dbReference type="FunFam" id="3.90.79.10:FF:000004">
    <property type="entry name" value="NADH pyrophosphatase"/>
    <property type="match status" value="1"/>
</dbReference>
<dbReference type="FunFam" id="3.90.79.20:FF:000001">
    <property type="entry name" value="NADH pyrophosphatase"/>
    <property type="match status" value="1"/>
</dbReference>
<dbReference type="Gene3D" id="3.90.79.20">
    <property type="match status" value="1"/>
</dbReference>
<dbReference type="Gene3D" id="3.90.79.10">
    <property type="entry name" value="Nucleoside Triphosphate Pyrophosphohydrolase"/>
    <property type="match status" value="1"/>
</dbReference>
<dbReference type="HAMAP" id="MF_00297">
    <property type="entry name" value="Nudix_NudC"/>
    <property type="match status" value="1"/>
</dbReference>
<dbReference type="InterPro" id="IPR050241">
    <property type="entry name" value="NAD-cap_RNA_hydrolase_NudC"/>
</dbReference>
<dbReference type="InterPro" id="IPR049734">
    <property type="entry name" value="NudC-like_C"/>
</dbReference>
<dbReference type="InterPro" id="IPR015797">
    <property type="entry name" value="NUDIX_hydrolase-like_dom_sf"/>
</dbReference>
<dbReference type="InterPro" id="IPR020084">
    <property type="entry name" value="NUDIX_hydrolase_CS"/>
</dbReference>
<dbReference type="InterPro" id="IPR000086">
    <property type="entry name" value="NUDIX_hydrolase_dom"/>
</dbReference>
<dbReference type="InterPro" id="IPR022925">
    <property type="entry name" value="RNA_Hydrolase_NudC"/>
</dbReference>
<dbReference type="InterPro" id="IPR015376">
    <property type="entry name" value="Znr_NADH_PPase"/>
</dbReference>
<dbReference type="NCBIfam" id="NF001299">
    <property type="entry name" value="PRK00241.1"/>
    <property type="match status" value="1"/>
</dbReference>
<dbReference type="PANTHER" id="PTHR42904:SF6">
    <property type="entry name" value="NAD-CAPPED RNA HYDROLASE NUDT12"/>
    <property type="match status" value="1"/>
</dbReference>
<dbReference type="PANTHER" id="PTHR42904">
    <property type="entry name" value="NUDIX HYDROLASE, NUDC SUBFAMILY"/>
    <property type="match status" value="1"/>
</dbReference>
<dbReference type="Pfam" id="PF00293">
    <property type="entry name" value="NUDIX"/>
    <property type="match status" value="1"/>
</dbReference>
<dbReference type="Pfam" id="PF09297">
    <property type="entry name" value="Zn_ribbon_NUD"/>
    <property type="match status" value="1"/>
</dbReference>
<dbReference type="SUPFAM" id="SSF55811">
    <property type="entry name" value="Nudix"/>
    <property type="match status" value="2"/>
</dbReference>
<dbReference type="PROSITE" id="PS51462">
    <property type="entry name" value="NUDIX"/>
    <property type="match status" value="1"/>
</dbReference>
<dbReference type="PROSITE" id="PS00893">
    <property type="entry name" value="NUDIX_BOX"/>
    <property type="match status" value="1"/>
</dbReference>
<sequence length="257" mass="29648">MAQQLSESDSGWWVVSDRGRIWLPEGELPYGSAAQWHLVGKMAYRIGEWQGMPVWLLCLTYPQDMASVRQLIDADRGLFQLAGRGVQLAEFFQSHRFCGYCGHPMHAGQQEWVRLCAHCQQRYYPQIAPCIIVAIRRDDHILLARHNRHRNGIYTVLAGFVEVGETLEQAAAREIFEESRLQVKNLRYVTSQPWPFPHSLMMAFLADYAAGDLCHDPKELQEADWYRYDRLPQLPPVGTVARRLIEDTVALCRVQHE</sequence>
<feature type="chain" id="PRO_1000204930" description="NAD-capped RNA hydrolase NudC">
    <location>
        <begin position="1"/>
        <end position="257"/>
    </location>
</feature>
<feature type="domain" description="Nudix hydrolase" evidence="1">
    <location>
        <begin position="125"/>
        <end position="248"/>
    </location>
</feature>
<feature type="short sequence motif" description="Nudix box" evidence="1">
    <location>
        <begin position="159"/>
        <end position="180"/>
    </location>
</feature>
<feature type="binding site" evidence="1">
    <location>
        <position position="69"/>
    </location>
    <ligand>
        <name>substrate</name>
    </ligand>
</feature>
<feature type="binding site" evidence="1">
    <location>
        <position position="98"/>
    </location>
    <ligand>
        <name>Zn(2+)</name>
        <dbReference type="ChEBI" id="CHEBI:29105"/>
    </ligand>
</feature>
<feature type="binding site" evidence="1">
    <location>
        <position position="101"/>
    </location>
    <ligand>
        <name>Zn(2+)</name>
        <dbReference type="ChEBI" id="CHEBI:29105"/>
    </ligand>
</feature>
<feature type="binding site" evidence="1">
    <location>
        <position position="111"/>
    </location>
    <ligand>
        <name>substrate</name>
    </ligand>
</feature>
<feature type="binding site" evidence="1">
    <location>
        <position position="116"/>
    </location>
    <ligand>
        <name>Zn(2+)</name>
        <dbReference type="ChEBI" id="CHEBI:29105"/>
    </ligand>
</feature>
<feature type="binding site" evidence="1">
    <location>
        <position position="119"/>
    </location>
    <ligand>
        <name>Zn(2+)</name>
        <dbReference type="ChEBI" id="CHEBI:29105"/>
    </ligand>
</feature>
<feature type="binding site" evidence="1">
    <location>
        <position position="124"/>
    </location>
    <ligand>
        <name>substrate</name>
    </ligand>
</feature>
<feature type="binding site" evidence="1">
    <location>
        <position position="158"/>
    </location>
    <ligand>
        <name>a divalent metal cation</name>
        <dbReference type="ChEBI" id="CHEBI:60240"/>
        <label>1</label>
    </ligand>
</feature>
<feature type="binding site" evidence="1">
    <location>
        <position position="174"/>
    </location>
    <ligand>
        <name>a divalent metal cation</name>
        <dbReference type="ChEBI" id="CHEBI:60240"/>
        <label>2</label>
    </ligand>
</feature>
<feature type="binding site" evidence="1">
    <location>
        <position position="174"/>
    </location>
    <ligand>
        <name>a divalent metal cation</name>
        <dbReference type="ChEBI" id="CHEBI:60240"/>
        <label>3</label>
    </ligand>
</feature>
<feature type="binding site" evidence="1">
    <location>
        <position position="178"/>
    </location>
    <ligand>
        <name>a divalent metal cation</name>
        <dbReference type="ChEBI" id="CHEBI:60240"/>
        <label>1</label>
    </ligand>
</feature>
<feature type="binding site" evidence="1">
    <location>
        <position position="178"/>
    </location>
    <ligand>
        <name>a divalent metal cation</name>
        <dbReference type="ChEBI" id="CHEBI:60240"/>
        <label>3</label>
    </ligand>
</feature>
<feature type="binding site" evidence="1">
    <location>
        <begin position="192"/>
        <end position="199"/>
    </location>
    <ligand>
        <name>substrate</name>
    </ligand>
</feature>
<feature type="binding site" evidence="1">
    <location>
        <position position="219"/>
    </location>
    <ligand>
        <name>a divalent metal cation</name>
        <dbReference type="ChEBI" id="CHEBI:60240"/>
        <label>1</label>
    </ligand>
</feature>
<feature type="binding site" evidence="1">
    <location>
        <position position="219"/>
    </location>
    <ligand>
        <name>a divalent metal cation</name>
        <dbReference type="ChEBI" id="CHEBI:60240"/>
        <label>3</label>
    </ligand>
</feature>
<feature type="binding site" evidence="1">
    <location>
        <position position="241"/>
    </location>
    <ligand>
        <name>substrate</name>
    </ligand>
</feature>
<comment type="function">
    <text evidence="1">mRNA decapping enzyme that specifically removes the nicotinamide adenine dinucleotide (NAD) cap from a subset of mRNAs by hydrolyzing the diphosphate linkage to produce nicotinamide mononucleotide (NMN) and 5' monophosphate mRNA. The NAD-cap is present at the 5'-end of some mRNAs and stabilizes RNA against 5'-processing. Has preference for mRNAs with a 5'-end purine. Catalyzes the hydrolysis of a broad range of dinucleotide pyrophosphates.</text>
</comment>
<comment type="catalytic activity">
    <reaction evidence="1">
        <text>a 5'-end NAD(+)-phospho-ribonucleoside in mRNA + H2O = a 5'-end phospho-adenosine-phospho-ribonucleoside in mRNA + beta-nicotinamide D-ribonucleotide + 2 H(+)</text>
        <dbReference type="Rhea" id="RHEA:60876"/>
        <dbReference type="Rhea" id="RHEA-COMP:15698"/>
        <dbReference type="Rhea" id="RHEA-COMP:15719"/>
        <dbReference type="ChEBI" id="CHEBI:14649"/>
        <dbReference type="ChEBI" id="CHEBI:15377"/>
        <dbReference type="ChEBI" id="CHEBI:15378"/>
        <dbReference type="ChEBI" id="CHEBI:144029"/>
        <dbReference type="ChEBI" id="CHEBI:144051"/>
    </reaction>
    <physiologicalReaction direction="left-to-right" evidence="1">
        <dbReference type="Rhea" id="RHEA:60877"/>
    </physiologicalReaction>
</comment>
<comment type="catalytic activity">
    <reaction evidence="1">
        <text>NAD(+) + H2O = beta-nicotinamide D-ribonucleotide + AMP + 2 H(+)</text>
        <dbReference type="Rhea" id="RHEA:11800"/>
        <dbReference type="ChEBI" id="CHEBI:14649"/>
        <dbReference type="ChEBI" id="CHEBI:15377"/>
        <dbReference type="ChEBI" id="CHEBI:15378"/>
        <dbReference type="ChEBI" id="CHEBI:57540"/>
        <dbReference type="ChEBI" id="CHEBI:456215"/>
        <dbReference type="EC" id="3.6.1.22"/>
    </reaction>
</comment>
<comment type="catalytic activity">
    <reaction evidence="1">
        <text>NADH + H2O = reduced beta-nicotinamide D-ribonucleotide + AMP + 2 H(+)</text>
        <dbReference type="Rhea" id="RHEA:48868"/>
        <dbReference type="ChEBI" id="CHEBI:15377"/>
        <dbReference type="ChEBI" id="CHEBI:15378"/>
        <dbReference type="ChEBI" id="CHEBI:57945"/>
        <dbReference type="ChEBI" id="CHEBI:90832"/>
        <dbReference type="ChEBI" id="CHEBI:456215"/>
        <dbReference type="EC" id="3.6.1.22"/>
    </reaction>
</comment>
<comment type="cofactor">
    <cofactor evidence="1">
        <name>Mg(2+)</name>
        <dbReference type="ChEBI" id="CHEBI:18420"/>
    </cofactor>
    <cofactor evidence="1">
        <name>Mn(2+)</name>
        <dbReference type="ChEBI" id="CHEBI:29035"/>
    </cofactor>
    <text evidence="1">Divalent metal cations. Mg(2+) or Mn(2+).</text>
</comment>
<comment type="cofactor">
    <cofactor evidence="1">
        <name>Zn(2+)</name>
        <dbReference type="ChEBI" id="CHEBI:29105"/>
    </cofactor>
    <text evidence="1">Binds 1 zinc ion per subunit.</text>
</comment>
<comment type="subunit">
    <text evidence="1">Homodimer.</text>
</comment>
<comment type="similarity">
    <text evidence="1">Belongs to the Nudix hydrolase family. NudC subfamily.</text>
</comment>
<keyword id="KW-0378">Hydrolase</keyword>
<keyword id="KW-0460">Magnesium</keyword>
<keyword id="KW-0464">Manganese</keyword>
<keyword id="KW-0479">Metal-binding</keyword>
<keyword id="KW-0520">NAD</keyword>
<keyword id="KW-0862">Zinc</keyword>
<accession>C5BHE7</accession>